<protein>
    <recommendedName>
        <fullName evidence="1">Large ribosomal subunit protein uL16</fullName>
    </recommendedName>
    <alternativeName>
        <fullName evidence="3">50S ribosomal protein L16</fullName>
    </alternativeName>
</protein>
<evidence type="ECO:0000255" key="1">
    <source>
        <dbReference type="HAMAP-Rule" id="MF_01342"/>
    </source>
</evidence>
<evidence type="ECO:0000256" key="2">
    <source>
        <dbReference type="SAM" id="MobiDB-lite"/>
    </source>
</evidence>
<evidence type="ECO:0000305" key="3"/>
<dbReference type="EMBL" id="CP000685">
    <property type="protein sequence ID" value="ABQ03426.1"/>
    <property type="molecule type" value="Genomic_DNA"/>
</dbReference>
<dbReference type="RefSeq" id="WP_008464295.1">
    <property type="nucleotide sequence ID" value="NZ_MUGZ01000005.1"/>
</dbReference>
<dbReference type="SMR" id="A5FMZ3"/>
<dbReference type="STRING" id="376686.Fjoh_0390"/>
<dbReference type="KEGG" id="fjo:Fjoh_0390"/>
<dbReference type="eggNOG" id="COG0197">
    <property type="taxonomic scope" value="Bacteria"/>
</dbReference>
<dbReference type="HOGENOM" id="CLU_078858_2_1_10"/>
<dbReference type="OrthoDB" id="9802589at2"/>
<dbReference type="Proteomes" id="UP000006694">
    <property type="component" value="Chromosome"/>
</dbReference>
<dbReference type="GO" id="GO:0022625">
    <property type="term" value="C:cytosolic large ribosomal subunit"/>
    <property type="evidence" value="ECO:0007669"/>
    <property type="project" value="TreeGrafter"/>
</dbReference>
<dbReference type="GO" id="GO:0019843">
    <property type="term" value="F:rRNA binding"/>
    <property type="evidence" value="ECO:0007669"/>
    <property type="project" value="UniProtKB-UniRule"/>
</dbReference>
<dbReference type="GO" id="GO:0003735">
    <property type="term" value="F:structural constituent of ribosome"/>
    <property type="evidence" value="ECO:0007669"/>
    <property type="project" value="InterPro"/>
</dbReference>
<dbReference type="GO" id="GO:0000049">
    <property type="term" value="F:tRNA binding"/>
    <property type="evidence" value="ECO:0007669"/>
    <property type="project" value="UniProtKB-KW"/>
</dbReference>
<dbReference type="GO" id="GO:0006412">
    <property type="term" value="P:translation"/>
    <property type="evidence" value="ECO:0007669"/>
    <property type="project" value="UniProtKB-UniRule"/>
</dbReference>
<dbReference type="CDD" id="cd01433">
    <property type="entry name" value="Ribosomal_L16_L10e"/>
    <property type="match status" value="1"/>
</dbReference>
<dbReference type="FunFam" id="3.90.1170.10:FF:000001">
    <property type="entry name" value="50S ribosomal protein L16"/>
    <property type="match status" value="1"/>
</dbReference>
<dbReference type="Gene3D" id="3.90.1170.10">
    <property type="entry name" value="Ribosomal protein L10e/L16"/>
    <property type="match status" value="1"/>
</dbReference>
<dbReference type="HAMAP" id="MF_01342">
    <property type="entry name" value="Ribosomal_uL16"/>
    <property type="match status" value="1"/>
</dbReference>
<dbReference type="InterPro" id="IPR047873">
    <property type="entry name" value="Ribosomal_uL16"/>
</dbReference>
<dbReference type="InterPro" id="IPR000114">
    <property type="entry name" value="Ribosomal_uL16_bact-type"/>
</dbReference>
<dbReference type="InterPro" id="IPR020798">
    <property type="entry name" value="Ribosomal_uL16_CS"/>
</dbReference>
<dbReference type="InterPro" id="IPR016180">
    <property type="entry name" value="Ribosomal_uL16_dom"/>
</dbReference>
<dbReference type="InterPro" id="IPR036920">
    <property type="entry name" value="Ribosomal_uL16_sf"/>
</dbReference>
<dbReference type="NCBIfam" id="TIGR01164">
    <property type="entry name" value="rplP_bact"/>
    <property type="match status" value="1"/>
</dbReference>
<dbReference type="PANTHER" id="PTHR12220">
    <property type="entry name" value="50S/60S RIBOSOMAL PROTEIN L16"/>
    <property type="match status" value="1"/>
</dbReference>
<dbReference type="PANTHER" id="PTHR12220:SF13">
    <property type="entry name" value="LARGE RIBOSOMAL SUBUNIT PROTEIN UL16M"/>
    <property type="match status" value="1"/>
</dbReference>
<dbReference type="Pfam" id="PF00252">
    <property type="entry name" value="Ribosomal_L16"/>
    <property type="match status" value="1"/>
</dbReference>
<dbReference type="PRINTS" id="PR00060">
    <property type="entry name" value="RIBOSOMALL16"/>
</dbReference>
<dbReference type="SUPFAM" id="SSF54686">
    <property type="entry name" value="Ribosomal protein L16p/L10e"/>
    <property type="match status" value="1"/>
</dbReference>
<dbReference type="PROSITE" id="PS00586">
    <property type="entry name" value="RIBOSOMAL_L16_1"/>
    <property type="match status" value="1"/>
</dbReference>
<dbReference type="PROSITE" id="PS00701">
    <property type="entry name" value="RIBOSOMAL_L16_2"/>
    <property type="match status" value="1"/>
</dbReference>
<accession>A5FMZ3</accession>
<proteinExistence type="inferred from homology"/>
<organism>
    <name type="scientific">Flavobacterium johnsoniae (strain ATCC 17061 / DSM 2064 / JCM 8514 / BCRC 14874 / CCUG 350202 / NBRC 14942 / NCIMB 11054 / UW101)</name>
    <name type="common">Cytophaga johnsonae</name>
    <dbReference type="NCBI Taxonomy" id="376686"/>
    <lineage>
        <taxon>Bacteria</taxon>
        <taxon>Pseudomonadati</taxon>
        <taxon>Bacteroidota</taxon>
        <taxon>Flavobacteriia</taxon>
        <taxon>Flavobacteriales</taxon>
        <taxon>Flavobacteriaceae</taxon>
        <taxon>Flavobacterium</taxon>
    </lineage>
</organism>
<name>RL16_FLAJ1</name>
<comment type="function">
    <text evidence="1">Binds 23S rRNA and is also seen to make contacts with the A and possibly P site tRNAs.</text>
</comment>
<comment type="subunit">
    <text evidence="1">Part of the 50S ribosomal subunit.</text>
</comment>
<comment type="similarity">
    <text evidence="1">Belongs to the universal ribosomal protein uL16 family.</text>
</comment>
<keyword id="KW-0687">Ribonucleoprotein</keyword>
<keyword id="KW-0689">Ribosomal protein</keyword>
<keyword id="KW-0694">RNA-binding</keyword>
<keyword id="KW-0699">rRNA-binding</keyword>
<keyword id="KW-0820">tRNA-binding</keyword>
<gene>
    <name evidence="1" type="primary">rplP</name>
    <name type="ordered locus">Fjoh_0390</name>
</gene>
<sequence length="141" mass="15928">MLQPKRTKYRKVQKGRMKGNSQRGHELSNGMFGIKSVHEDGMFLTSRQIEAARIAATRYMKREGQLWIKIFPDKPITKKPLEVRMGKGKGAVEYWAAVVKPGRIMFEVGGVPLSVAKEALRLAAQKLPVKTKFVVARDFEA</sequence>
<reference key="1">
    <citation type="journal article" date="2009" name="Appl. Environ. Microbiol.">
        <title>Novel features of the polysaccharide-digesting gliding bacterium Flavobacterium johnsoniae as revealed by genome sequence analysis.</title>
        <authorList>
            <person name="McBride M.J."/>
            <person name="Xie G."/>
            <person name="Martens E.C."/>
            <person name="Lapidus A."/>
            <person name="Henrissat B."/>
            <person name="Rhodes R.G."/>
            <person name="Goltsman E."/>
            <person name="Wang W."/>
            <person name="Xu J."/>
            <person name="Hunnicutt D.W."/>
            <person name="Staroscik A.M."/>
            <person name="Hoover T.R."/>
            <person name="Cheng Y.Q."/>
            <person name="Stein J.L."/>
        </authorList>
    </citation>
    <scope>NUCLEOTIDE SEQUENCE [LARGE SCALE GENOMIC DNA]</scope>
    <source>
        <strain>ATCC 17061 / DSM 2064 / JCM 8514 / BCRC 14874 / CCUG 350202 / NBRC 14942 / NCIMB 11054 / UW101</strain>
    </source>
</reference>
<feature type="chain" id="PRO_1000086756" description="Large ribosomal subunit protein uL16">
    <location>
        <begin position="1"/>
        <end position="141"/>
    </location>
</feature>
<feature type="region of interest" description="Disordered" evidence="2">
    <location>
        <begin position="1"/>
        <end position="29"/>
    </location>
</feature>
<feature type="compositionally biased region" description="Basic residues" evidence="2">
    <location>
        <begin position="1"/>
        <end position="17"/>
    </location>
</feature>